<comment type="subcellular location">
    <subcellularLocation>
        <location evidence="2">Cell membrane</location>
        <topology evidence="2">Multi-pass membrane protein</topology>
    </subcellularLocation>
</comment>
<reference key="1">
    <citation type="journal article" date="1998" name="Microbiology">
        <title>A 35.7 kb DNA fragment from the Bacillus subtilis chromosome containing a putative 12.3 kb operon involved in hexuronate catabolism and a perfectly symmetrical hypothetical catabolite-responsive element.</title>
        <authorList>
            <person name="Rivolta C."/>
            <person name="Soldo B."/>
            <person name="Lazarevic V."/>
            <person name="Joris B."/>
            <person name="Mauel C."/>
            <person name="Karamata D."/>
        </authorList>
    </citation>
    <scope>NUCLEOTIDE SEQUENCE [GENOMIC DNA]</scope>
    <source>
        <strain>168</strain>
    </source>
</reference>
<reference key="2">
    <citation type="journal article" date="1997" name="Nature">
        <title>The complete genome sequence of the Gram-positive bacterium Bacillus subtilis.</title>
        <authorList>
            <person name="Kunst F."/>
            <person name="Ogasawara N."/>
            <person name="Moszer I."/>
            <person name="Albertini A.M."/>
            <person name="Alloni G."/>
            <person name="Azevedo V."/>
            <person name="Bertero M.G."/>
            <person name="Bessieres P."/>
            <person name="Bolotin A."/>
            <person name="Borchert S."/>
            <person name="Borriss R."/>
            <person name="Boursier L."/>
            <person name="Brans A."/>
            <person name="Braun M."/>
            <person name="Brignell S.C."/>
            <person name="Bron S."/>
            <person name="Brouillet S."/>
            <person name="Bruschi C.V."/>
            <person name="Caldwell B."/>
            <person name="Capuano V."/>
            <person name="Carter N.M."/>
            <person name="Choi S.-K."/>
            <person name="Codani J.-J."/>
            <person name="Connerton I.F."/>
            <person name="Cummings N.J."/>
            <person name="Daniel R.A."/>
            <person name="Denizot F."/>
            <person name="Devine K.M."/>
            <person name="Duesterhoeft A."/>
            <person name="Ehrlich S.D."/>
            <person name="Emmerson P.T."/>
            <person name="Entian K.-D."/>
            <person name="Errington J."/>
            <person name="Fabret C."/>
            <person name="Ferrari E."/>
            <person name="Foulger D."/>
            <person name="Fritz C."/>
            <person name="Fujita M."/>
            <person name="Fujita Y."/>
            <person name="Fuma S."/>
            <person name="Galizzi A."/>
            <person name="Galleron N."/>
            <person name="Ghim S.-Y."/>
            <person name="Glaser P."/>
            <person name="Goffeau A."/>
            <person name="Golightly E.J."/>
            <person name="Grandi G."/>
            <person name="Guiseppi G."/>
            <person name="Guy B.J."/>
            <person name="Haga K."/>
            <person name="Haiech J."/>
            <person name="Harwood C.R."/>
            <person name="Henaut A."/>
            <person name="Hilbert H."/>
            <person name="Holsappel S."/>
            <person name="Hosono S."/>
            <person name="Hullo M.-F."/>
            <person name="Itaya M."/>
            <person name="Jones L.-M."/>
            <person name="Joris B."/>
            <person name="Karamata D."/>
            <person name="Kasahara Y."/>
            <person name="Klaerr-Blanchard M."/>
            <person name="Klein C."/>
            <person name="Kobayashi Y."/>
            <person name="Koetter P."/>
            <person name="Koningstein G."/>
            <person name="Krogh S."/>
            <person name="Kumano M."/>
            <person name="Kurita K."/>
            <person name="Lapidus A."/>
            <person name="Lardinois S."/>
            <person name="Lauber J."/>
            <person name="Lazarevic V."/>
            <person name="Lee S.-M."/>
            <person name="Levine A."/>
            <person name="Liu H."/>
            <person name="Masuda S."/>
            <person name="Mauel C."/>
            <person name="Medigue C."/>
            <person name="Medina N."/>
            <person name="Mellado R.P."/>
            <person name="Mizuno M."/>
            <person name="Moestl D."/>
            <person name="Nakai S."/>
            <person name="Noback M."/>
            <person name="Noone D."/>
            <person name="O'Reilly M."/>
            <person name="Ogawa K."/>
            <person name="Ogiwara A."/>
            <person name="Oudega B."/>
            <person name="Park S.-H."/>
            <person name="Parro V."/>
            <person name="Pohl T.M."/>
            <person name="Portetelle D."/>
            <person name="Porwollik S."/>
            <person name="Prescott A.M."/>
            <person name="Presecan E."/>
            <person name="Pujic P."/>
            <person name="Purnelle B."/>
            <person name="Rapoport G."/>
            <person name="Rey M."/>
            <person name="Reynolds S."/>
            <person name="Rieger M."/>
            <person name="Rivolta C."/>
            <person name="Rocha E."/>
            <person name="Roche B."/>
            <person name="Rose M."/>
            <person name="Sadaie Y."/>
            <person name="Sato T."/>
            <person name="Scanlan E."/>
            <person name="Schleich S."/>
            <person name="Schroeter R."/>
            <person name="Scoffone F."/>
            <person name="Sekiguchi J."/>
            <person name="Sekowska A."/>
            <person name="Seror S.J."/>
            <person name="Serror P."/>
            <person name="Shin B.-S."/>
            <person name="Soldo B."/>
            <person name="Sorokin A."/>
            <person name="Tacconi E."/>
            <person name="Takagi T."/>
            <person name="Takahashi H."/>
            <person name="Takemaru K."/>
            <person name="Takeuchi M."/>
            <person name="Tamakoshi A."/>
            <person name="Tanaka T."/>
            <person name="Terpstra P."/>
            <person name="Tognoni A."/>
            <person name="Tosato V."/>
            <person name="Uchiyama S."/>
            <person name="Vandenbol M."/>
            <person name="Vannier F."/>
            <person name="Vassarotti A."/>
            <person name="Viari A."/>
            <person name="Wambutt R."/>
            <person name="Wedler E."/>
            <person name="Wedler H."/>
            <person name="Weitzenegger T."/>
            <person name="Winters P."/>
            <person name="Wipat A."/>
            <person name="Yamamoto H."/>
            <person name="Yamane K."/>
            <person name="Yasumoto K."/>
            <person name="Yata K."/>
            <person name="Yoshida K."/>
            <person name="Yoshikawa H.-F."/>
            <person name="Zumstein E."/>
            <person name="Yoshikawa H."/>
            <person name="Danchin A."/>
        </authorList>
    </citation>
    <scope>NUCLEOTIDE SEQUENCE [LARGE SCALE GENOMIC DNA]</scope>
    <source>
        <strain>168</strain>
    </source>
</reference>
<accession>O35027</accession>
<accession>Q796P1</accession>
<keyword id="KW-1003">Cell membrane</keyword>
<keyword id="KW-0472">Membrane</keyword>
<keyword id="KW-1185">Reference proteome</keyword>
<keyword id="KW-0812">Transmembrane</keyword>
<keyword id="KW-1133">Transmembrane helix</keyword>
<name>YJGA_BACSU</name>
<proteinExistence type="predicted"/>
<protein>
    <recommendedName>
        <fullName>Uncharacterized membrane protein YjgA</fullName>
    </recommendedName>
</protein>
<gene>
    <name type="primary">yjgA</name>
    <name type="ordered locus">BSU12140</name>
</gene>
<evidence type="ECO:0000255" key="1"/>
<evidence type="ECO:0000305" key="2"/>
<sequence>MKRNRWIYAVFTILIIGLGLGSRAFSSVLPDTLNTYLGDSLWAAMIFTGCGFLFRKLKTMITGIISLSFCFVIEFSQLYHAEWIDQIRDTSLGGLVLGYGFLWSDIEAYTIGIAACAAIELLVLGIKKRRCM</sequence>
<feature type="chain" id="PRO_0000375820" description="Uncharacterized membrane protein YjgA">
    <location>
        <begin position="1"/>
        <end position="132"/>
    </location>
</feature>
<feature type="transmembrane region" description="Helical" evidence="1">
    <location>
        <begin position="6"/>
        <end position="26"/>
    </location>
</feature>
<feature type="transmembrane region" description="Helical" evidence="1">
    <location>
        <begin position="34"/>
        <end position="54"/>
    </location>
</feature>
<feature type="transmembrane region" description="Helical" evidence="1">
    <location>
        <begin position="59"/>
        <end position="79"/>
    </location>
</feature>
<feature type="transmembrane region" description="Helical" evidence="1">
    <location>
        <begin position="106"/>
        <end position="126"/>
    </location>
</feature>
<organism>
    <name type="scientific">Bacillus subtilis (strain 168)</name>
    <dbReference type="NCBI Taxonomy" id="224308"/>
    <lineage>
        <taxon>Bacteria</taxon>
        <taxon>Bacillati</taxon>
        <taxon>Bacillota</taxon>
        <taxon>Bacilli</taxon>
        <taxon>Bacillales</taxon>
        <taxon>Bacillaceae</taxon>
        <taxon>Bacillus</taxon>
    </lineage>
</organism>
<dbReference type="EMBL" id="AF015825">
    <property type="protein sequence ID" value="AAC46310.1"/>
    <property type="molecule type" value="Genomic_DNA"/>
</dbReference>
<dbReference type="EMBL" id="AL009126">
    <property type="protein sequence ID" value="CAB13071.1"/>
    <property type="molecule type" value="Genomic_DNA"/>
</dbReference>
<dbReference type="PIR" id="C69850">
    <property type="entry name" value="C69850"/>
</dbReference>
<dbReference type="RefSeq" id="NP_389096.1">
    <property type="nucleotide sequence ID" value="NC_000964.3"/>
</dbReference>
<dbReference type="RefSeq" id="WP_009967034.1">
    <property type="nucleotide sequence ID" value="NZ_OZ025638.1"/>
</dbReference>
<dbReference type="FunCoup" id="O35027">
    <property type="interactions" value="28"/>
</dbReference>
<dbReference type="STRING" id="224308.BSU12140"/>
<dbReference type="PaxDb" id="224308-BSU12140"/>
<dbReference type="EnsemblBacteria" id="CAB13071">
    <property type="protein sequence ID" value="CAB13071"/>
    <property type="gene ID" value="BSU_12140"/>
</dbReference>
<dbReference type="GeneID" id="939397"/>
<dbReference type="KEGG" id="bsu:BSU12140"/>
<dbReference type="PATRIC" id="fig|224308.179.peg.1312"/>
<dbReference type="eggNOG" id="COG2205">
    <property type="taxonomic scope" value="Bacteria"/>
</dbReference>
<dbReference type="InParanoid" id="O35027"/>
<dbReference type="OrthoDB" id="5360192at2"/>
<dbReference type="BioCyc" id="BSUB:BSU12140-MONOMER"/>
<dbReference type="Proteomes" id="UP000001570">
    <property type="component" value="Chromosome"/>
</dbReference>
<dbReference type="GO" id="GO:0005886">
    <property type="term" value="C:plasma membrane"/>
    <property type="evidence" value="ECO:0007669"/>
    <property type="project" value="UniProtKB-SubCell"/>
</dbReference>
<dbReference type="InterPro" id="IPR021257">
    <property type="entry name" value="DUF2809"/>
</dbReference>
<dbReference type="Pfam" id="PF10990">
    <property type="entry name" value="DUF2809"/>
    <property type="match status" value="1"/>
</dbReference>